<sequence length="182" mass="20842">MVKALLVGSKVLIPNVDESRYIYSNGFYGKAVGISKPKDPKDIIRPLELSLIESVYLAKKGLIKVIDKNGEVLEYEKLYEYSSKIINKFDIMYRVYEDLREKGFIVRSGVKYGADFAVYTLGPGLEHAPYVVIAVDIDEEITPHELLSFGRVSHSTRKRLVLALVDRKSESVRYIMFKWVKM</sequence>
<feature type="chain" id="PRO_1000216083" description="tRNA-splicing endonuclease">
    <location>
        <begin position="1"/>
        <end position="182"/>
    </location>
</feature>
<feature type="active site" evidence="1">
    <location>
        <position position="119"/>
    </location>
</feature>
<feature type="active site" evidence="1">
    <location>
        <position position="127"/>
    </location>
</feature>
<feature type="active site" evidence="1">
    <location>
        <position position="158"/>
    </location>
</feature>
<dbReference type="EC" id="4.6.1.16" evidence="1"/>
<dbReference type="EMBL" id="CP001404">
    <property type="protein sequence ID" value="ACP48250.1"/>
    <property type="molecule type" value="Genomic_DNA"/>
</dbReference>
<dbReference type="RefSeq" id="WP_012717353.1">
    <property type="nucleotide sequence ID" value="NC_012623.1"/>
</dbReference>
<dbReference type="SMR" id="C3NGJ0"/>
<dbReference type="GeneID" id="7810004"/>
<dbReference type="KEGG" id="sin:YN1551_1144"/>
<dbReference type="HOGENOM" id="CLU_114393_0_0_2"/>
<dbReference type="Proteomes" id="UP000006818">
    <property type="component" value="Chromosome"/>
</dbReference>
<dbReference type="GO" id="GO:0005737">
    <property type="term" value="C:cytoplasm"/>
    <property type="evidence" value="ECO:0007669"/>
    <property type="project" value="TreeGrafter"/>
</dbReference>
<dbReference type="GO" id="GO:0016829">
    <property type="term" value="F:lyase activity"/>
    <property type="evidence" value="ECO:0007669"/>
    <property type="project" value="UniProtKB-KW"/>
</dbReference>
<dbReference type="GO" id="GO:0003676">
    <property type="term" value="F:nucleic acid binding"/>
    <property type="evidence" value="ECO:0007669"/>
    <property type="project" value="InterPro"/>
</dbReference>
<dbReference type="GO" id="GO:0000213">
    <property type="term" value="F:tRNA-intron endonuclease activity"/>
    <property type="evidence" value="ECO:0007669"/>
    <property type="project" value="UniProtKB-UniRule"/>
</dbReference>
<dbReference type="GO" id="GO:0006388">
    <property type="term" value="P:tRNA splicing, via endonucleolytic cleavage and ligation"/>
    <property type="evidence" value="ECO:0007669"/>
    <property type="project" value="UniProtKB-UniRule"/>
</dbReference>
<dbReference type="CDD" id="cd22363">
    <property type="entry name" value="tRNA-intron_lyase_C"/>
    <property type="match status" value="1"/>
</dbReference>
<dbReference type="FunFam" id="3.40.1350.10:FF:000006">
    <property type="entry name" value="tRNA-splicing endonuclease"/>
    <property type="match status" value="1"/>
</dbReference>
<dbReference type="Gene3D" id="3.40.1350.10">
    <property type="match status" value="1"/>
</dbReference>
<dbReference type="Gene3D" id="3.40.1170.20">
    <property type="entry name" value="tRNA intron endonuclease, N-terminal domain"/>
    <property type="match status" value="1"/>
</dbReference>
<dbReference type="HAMAP" id="MF_01833">
    <property type="entry name" value="EndA_short"/>
    <property type="match status" value="1"/>
</dbReference>
<dbReference type="InterPro" id="IPR011856">
    <property type="entry name" value="tRNA_endonuc-like_dom_sf"/>
</dbReference>
<dbReference type="InterPro" id="IPR036167">
    <property type="entry name" value="tRNA_intron_Endo_cat-like_sf"/>
</dbReference>
<dbReference type="InterPro" id="IPR006677">
    <property type="entry name" value="tRNA_intron_Endonuc_cat-like"/>
</dbReference>
<dbReference type="InterPro" id="IPR006678">
    <property type="entry name" value="tRNA_intron_Endonuc_N"/>
</dbReference>
<dbReference type="InterPro" id="IPR036740">
    <property type="entry name" value="tRNA_intron_Endonuc_N_sf"/>
</dbReference>
<dbReference type="InterPro" id="IPR006676">
    <property type="entry name" value="tRNA_splic"/>
</dbReference>
<dbReference type="InterPro" id="IPR016442">
    <property type="entry name" value="tRNA_splic_arch_short"/>
</dbReference>
<dbReference type="NCBIfam" id="TIGR00324">
    <property type="entry name" value="endA"/>
    <property type="match status" value="1"/>
</dbReference>
<dbReference type="PANTHER" id="PTHR21227">
    <property type="entry name" value="TRNA-SPLICING ENDONUCLEASE SUBUNIT SEN2"/>
    <property type="match status" value="1"/>
</dbReference>
<dbReference type="PANTHER" id="PTHR21227:SF0">
    <property type="entry name" value="TRNA-SPLICING ENDONUCLEASE SUBUNIT SEN2"/>
    <property type="match status" value="1"/>
</dbReference>
<dbReference type="Pfam" id="PF01974">
    <property type="entry name" value="tRNA_int_endo"/>
    <property type="match status" value="1"/>
</dbReference>
<dbReference type="Pfam" id="PF02778">
    <property type="entry name" value="tRNA_int_endo_N"/>
    <property type="match status" value="1"/>
</dbReference>
<dbReference type="PIRSF" id="PIRSF005285">
    <property type="entry name" value="tRNA_splic_archaea"/>
    <property type="match status" value="1"/>
</dbReference>
<dbReference type="SUPFAM" id="SSF53032">
    <property type="entry name" value="tRNA-intron endonuclease catalytic domain-like"/>
    <property type="match status" value="1"/>
</dbReference>
<dbReference type="SUPFAM" id="SSF55267">
    <property type="entry name" value="tRNA-intron endonuclease N-terminal domain-like"/>
    <property type="match status" value="1"/>
</dbReference>
<gene>
    <name evidence="1" type="primary">endA</name>
    <name type="ordered locus">YN1551_1144</name>
</gene>
<comment type="function">
    <text evidence="1">Endonuclease that removes tRNA introns. Cleaves pre-tRNA at the 5'- and 3'-splice sites to release the intron. The products are an intron and two tRNA half-molecules bearing 2',3' cyclic phosphate and 5'-OH termini. Recognizes a pseudosymmetric substrate in which 2 bulged loops of 3 bases are separated by a stem of 4 bp.</text>
</comment>
<comment type="catalytic activity">
    <reaction evidence="1">
        <text>pretRNA = a 3'-half-tRNA molecule with a 5'-OH end + a 5'-half-tRNA molecule with a 2',3'-cyclic phosphate end + an intron with a 2',3'-cyclic phosphate and a 5'-hydroxyl terminus.</text>
        <dbReference type="EC" id="4.6.1.16"/>
    </reaction>
</comment>
<comment type="subunit">
    <text evidence="1">Homotetramer; although the tetramer contains four active sites, only two participate in the cleavage. Therefore, it should be considered as a dimer of dimers.</text>
</comment>
<comment type="similarity">
    <text evidence="1">Belongs to the tRNA-intron endonuclease family. Archaeal short subfamily.</text>
</comment>
<organism>
    <name type="scientific">Saccharolobus islandicus (strain Y.N.15.51 / Yellowstone #2)</name>
    <name type="common">Sulfolobus islandicus</name>
    <dbReference type="NCBI Taxonomy" id="419942"/>
    <lineage>
        <taxon>Archaea</taxon>
        <taxon>Thermoproteota</taxon>
        <taxon>Thermoprotei</taxon>
        <taxon>Sulfolobales</taxon>
        <taxon>Sulfolobaceae</taxon>
        <taxon>Saccharolobus</taxon>
    </lineage>
</organism>
<protein>
    <recommendedName>
        <fullName evidence="1">tRNA-splicing endonuclease</fullName>
        <ecNumber evidence="1">4.6.1.16</ecNumber>
    </recommendedName>
    <alternativeName>
        <fullName evidence="1">tRNA-intron endonuclease</fullName>
    </alternativeName>
</protein>
<evidence type="ECO:0000255" key="1">
    <source>
        <dbReference type="HAMAP-Rule" id="MF_01833"/>
    </source>
</evidence>
<reference key="1">
    <citation type="journal article" date="2009" name="Proc. Natl. Acad. Sci. U.S.A.">
        <title>Biogeography of the Sulfolobus islandicus pan-genome.</title>
        <authorList>
            <person name="Reno M.L."/>
            <person name="Held N.L."/>
            <person name="Fields C.J."/>
            <person name="Burke P.V."/>
            <person name="Whitaker R.J."/>
        </authorList>
    </citation>
    <scope>NUCLEOTIDE SEQUENCE [LARGE SCALE GENOMIC DNA]</scope>
    <source>
        <strain>Y.N.15.51 / Yellowstone #2</strain>
    </source>
</reference>
<name>ENDA_SACI1</name>
<accession>C3NGJ0</accession>
<keyword id="KW-0456">Lyase</keyword>
<keyword id="KW-0819">tRNA processing</keyword>
<proteinExistence type="inferred from homology"/>